<protein>
    <recommendedName>
        <fullName evidence="1">tRNA dimethylallyltransferase</fullName>
        <ecNumber evidence="1">2.5.1.75</ecNumber>
    </recommendedName>
    <alternativeName>
        <fullName evidence="1">Dimethylallyl diphosphate:tRNA dimethylallyltransferase</fullName>
        <shortName evidence="1">DMAPP:tRNA dimethylallyltransferase</shortName>
        <shortName evidence="1">DMATase</shortName>
    </alternativeName>
    <alternativeName>
        <fullName evidence="1">Isopentenyl-diphosphate:tRNA isopentenyltransferase</fullName>
        <shortName evidence="1">IPP transferase</shortName>
        <shortName evidence="1">IPPT</shortName>
        <shortName evidence="1">IPTase</shortName>
    </alternativeName>
</protein>
<gene>
    <name evidence="1" type="primary">miaA</name>
    <name type="ordered locus">BPUM_1624</name>
</gene>
<evidence type="ECO:0000255" key="1">
    <source>
        <dbReference type="HAMAP-Rule" id="MF_00185"/>
    </source>
</evidence>
<evidence type="ECO:0000305" key="2"/>
<organism>
    <name type="scientific">Bacillus pumilus (strain SAFR-032)</name>
    <dbReference type="NCBI Taxonomy" id="315750"/>
    <lineage>
        <taxon>Bacteria</taxon>
        <taxon>Bacillati</taxon>
        <taxon>Bacillota</taxon>
        <taxon>Bacilli</taxon>
        <taxon>Bacillales</taxon>
        <taxon>Bacillaceae</taxon>
        <taxon>Bacillus</taxon>
    </lineage>
</organism>
<dbReference type="EC" id="2.5.1.75" evidence="1"/>
<dbReference type="EMBL" id="CP000813">
    <property type="protein sequence ID" value="ABV62306.1"/>
    <property type="status" value="ALT_INIT"/>
    <property type="molecule type" value="Genomic_DNA"/>
</dbReference>
<dbReference type="RefSeq" id="WP_041815539.1">
    <property type="nucleotide sequence ID" value="NC_009848.4"/>
</dbReference>
<dbReference type="SMR" id="A8FDI9"/>
<dbReference type="STRING" id="315750.BPUM_1624"/>
<dbReference type="GeneID" id="5620886"/>
<dbReference type="KEGG" id="bpu:BPUM_1624"/>
<dbReference type="eggNOG" id="COG0324">
    <property type="taxonomic scope" value="Bacteria"/>
</dbReference>
<dbReference type="HOGENOM" id="CLU_032616_0_1_9"/>
<dbReference type="OrthoDB" id="9776390at2"/>
<dbReference type="Proteomes" id="UP000001355">
    <property type="component" value="Chromosome"/>
</dbReference>
<dbReference type="GO" id="GO:0005524">
    <property type="term" value="F:ATP binding"/>
    <property type="evidence" value="ECO:0007669"/>
    <property type="project" value="UniProtKB-UniRule"/>
</dbReference>
<dbReference type="GO" id="GO:0052381">
    <property type="term" value="F:tRNA dimethylallyltransferase activity"/>
    <property type="evidence" value="ECO:0007669"/>
    <property type="project" value="UniProtKB-UniRule"/>
</dbReference>
<dbReference type="GO" id="GO:0006400">
    <property type="term" value="P:tRNA modification"/>
    <property type="evidence" value="ECO:0007669"/>
    <property type="project" value="TreeGrafter"/>
</dbReference>
<dbReference type="FunFam" id="1.10.20.140:FF:000001">
    <property type="entry name" value="tRNA dimethylallyltransferase"/>
    <property type="match status" value="1"/>
</dbReference>
<dbReference type="Gene3D" id="1.10.20.140">
    <property type="match status" value="1"/>
</dbReference>
<dbReference type="Gene3D" id="3.40.50.300">
    <property type="entry name" value="P-loop containing nucleotide triphosphate hydrolases"/>
    <property type="match status" value="1"/>
</dbReference>
<dbReference type="HAMAP" id="MF_00185">
    <property type="entry name" value="IPP_trans"/>
    <property type="match status" value="1"/>
</dbReference>
<dbReference type="InterPro" id="IPR039657">
    <property type="entry name" value="Dimethylallyltransferase"/>
</dbReference>
<dbReference type="InterPro" id="IPR018022">
    <property type="entry name" value="IPT"/>
</dbReference>
<dbReference type="InterPro" id="IPR027417">
    <property type="entry name" value="P-loop_NTPase"/>
</dbReference>
<dbReference type="NCBIfam" id="TIGR00174">
    <property type="entry name" value="miaA"/>
    <property type="match status" value="1"/>
</dbReference>
<dbReference type="PANTHER" id="PTHR11088">
    <property type="entry name" value="TRNA DIMETHYLALLYLTRANSFERASE"/>
    <property type="match status" value="1"/>
</dbReference>
<dbReference type="PANTHER" id="PTHR11088:SF60">
    <property type="entry name" value="TRNA DIMETHYLALLYLTRANSFERASE"/>
    <property type="match status" value="1"/>
</dbReference>
<dbReference type="Pfam" id="PF01715">
    <property type="entry name" value="IPPT"/>
    <property type="match status" value="1"/>
</dbReference>
<dbReference type="SUPFAM" id="SSF52540">
    <property type="entry name" value="P-loop containing nucleoside triphosphate hydrolases"/>
    <property type="match status" value="2"/>
</dbReference>
<sequence length="318" mass="36259">MKKTKQPVIVLVGPTAVGKTKLSIHIAKAYNGEIISGDSMQIYKGMDIGTAKITSEEMDGVPHHLIDIKEPDESFSTAEFQQLVRMKIKEIAARGKTPMIVGGTGLYIQSVLYDYTFTDEKSDPAFREEMALFEQQHGPLQLHEKLKAVDPDAAKAIHPNNVRRVIRALEVIHTTGQKMSEMQNGHQEVPLYDTAFIGLKMDRELLYERIHQRIDMMIDEGLIEEVSALYQSGLKDCQSVQAIGYKELYTYFQGDCSLDEAIQQLKQNSRRYAKRQFTWFRNKMDVTWFDMTPPCHFSDKKEEIFAYIAGKLGLKAKL</sequence>
<keyword id="KW-0067">ATP-binding</keyword>
<keyword id="KW-0460">Magnesium</keyword>
<keyword id="KW-0547">Nucleotide-binding</keyword>
<keyword id="KW-0808">Transferase</keyword>
<keyword id="KW-0819">tRNA processing</keyword>
<proteinExistence type="inferred from homology"/>
<reference key="1">
    <citation type="journal article" date="2007" name="PLoS ONE">
        <title>Paradoxical DNA repair and peroxide resistance gene conservation in Bacillus pumilus SAFR-032.</title>
        <authorList>
            <person name="Gioia J."/>
            <person name="Yerrapragada S."/>
            <person name="Qin X."/>
            <person name="Jiang H."/>
            <person name="Igboeli O.C."/>
            <person name="Muzny D."/>
            <person name="Dugan-Rocha S."/>
            <person name="Ding Y."/>
            <person name="Hawes A."/>
            <person name="Liu W."/>
            <person name="Perez L."/>
            <person name="Kovar C."/>
            <person name="Dinh H."/>
            <person name="Lee S."/>
            <person name="Nazareth L."/>
            <person name="Blyth P."/>
            <person name="Holder M."/>
            <person name="Buhay C."/>
            <person name="Tirumalai M.R."/>
            <person name="Liu Y."/>
            <person name="Dasgupta I."/>
            <person name="Bokhetache L."/>
            <person name="Fujita M."/>
            <person name="Karouia F."/>
            <person name="Eswara Moorthy P."/>
            <person name="Siefert J."/>
            <person name="Uzman A."/>
            <person name="Buzumbo P."/>
            <person name="Verma A."/>
            <person name="Zwiya H."/>
            <person name="McWilliams B.D."/>
            <person name="Olowu A."/>
            <person name="Clinkenbeard K.D."/>
            <person name="Newcombe D."/>
            <person name="Golebiewski L."/>
            <person name="Petrosino J.F."/>
            <person name="Nicholson W.L."/>
            <person name="Fox G.E."/>
            <person name="Venkateswaran K."/>
            <person name="Highlander S.K."/>
            <person name="Weinstock G.M."/>
        </authorList>
    </citation>
    <scope>NUCLEOTIDE SEQUENCE [LARGE SCALE GENOMIC DNA]</scope>
    <source>
        <strain>SAFR-032</strain>
    </source>
</reference>
<feature type="chain" id="PRO_0000377075" description="tRNA dimethylallyltransferase">
    <location>
        <begin position="1"/>
        <end position="318"/>
    </location>
</feature>
<feature type="region of interest" description="Interaction with substrate tRNA" evidence="1">
    <location>
        <begin position="38"/>
        <end position="41"/>
    </location>
</feature>
<feature type="binding site" evidence="1">
    <location>
        <begin position="13"/>
        <end position="20"/>
    </location>
    <ligand>
        <name>ATP</name>
        <dbReference type="ChEBI" id="CHEBI:30616"/>
    </ligand>
</feature>
<feature type="binding site" evidence="1">
    <location>
        <begin position="15"/>
        <end position="20"/>
    </location>
    <ligand>
        <name>substrate</name>
    </ligand>
</feature>
<feature type="site" description="Interaction with substrate tRNA" evidence="1">
    <location>
        <position position="104"/>
    </location>
</feature>
<feature type="site" description="Interaction with substrate tRNA" evidence="1">
    <location>
        <position position="127"/>
    </location>
</feature>
<name>MIAA_BACP2</name>
<accession>A8FDI9</accession>
<comment type="function">
    <text evidence="1">Catalyzes the transfer of a dimethylallyl group onto the adenine at position 37 in tRNAs that read codons beginning with uridine, leading to the formation of N6-(dimethylallyl)adenosine (i(6)A).</text>
</comment>
<comment type="catalytic activity">
    <reaction evidence="1">
        <text>adenosine(37) in tRNA + dimethylallyl diphosphate = N(6)-dimethylallyladenosine(37) in tRNA + diphosphate</text>
        <dbReference type="Rhea" id="RHEA:26482"/>
        <dbReference type="Rhea" id="RHEA-COMP:10162"/>
        <dbReference type="Rhea" id="RHEA-COMP:10375"/>
        <dbReference type="ChEBI" id="CHEBI:33019"/>
        <dbReference type="ChEBI" id="CHEBI:57623"/>
        <dbReference type="ChEBI" id="CHEBI:74411"/>
        <dbReference type="ChEBI" id="CHEBI:74415"/>
        <dbReference type="EC" id="2.5.1.75"/>
    </reaction>
</comment>
<comment type="cofactor">
    <cofactor evidence="1">
        <name>Mg(2+)</name>
        <dbReference type="ChEBI" id="CHEBI:18420"/>
    </cofactor>
</comment>
<comment type="subunit">
    <text evidence="1">Monomer.</text>
</comment>
<comment type="similarity">
    <text evidence="1">Belongs to the IPP transferase family.</text>
</comment>
<comment type="sequence caution" evidence="2">
    <conflict type="erroneous initiation">
        <sequence resource="EMBL-CDS" id="ABV62306"/>
    </conflict>
</comment>